<organism>
    <name type="scientific">Acinetobacter baumannii (strain ATCC 17978 / DSM 105126 / CIP 53.77 / LMG 1025 / NCDC KC755 / 5377)</name>
    <dbReference type="NCBI Taxonomy" id="400667"/>
    <lineage>
        <taxon>Bacteria</taxon>
        <taxon>Pseudomonadati</taxon>
        <taxon>Pseudomonadota</taxon>
        <taxon>Gammaproteobacteria</taxon>
        <taxon>Moraxellales</taxon>
        <taxon>Moraxellaceae</taxon>
        <taxon>Acinetobacter</taxon>
        <taxon>Acinetobacter calcoaceticus/baumannii complex</taxon>
    </lineage>
</organism>
<dbReference type="EC" id="6.3.4.21" evidence="1"/>
<dbReference type="EMBL" id="CP000521">
    <property type="protein sequence ID" value="ABO13769.2"/>
    <property type="molecule type" value="Genomic_DNA"/>
</dbReference>
<dbReference type="RefSeq" id="WP_000074557.1">
    <property type="nucleotide sequence ID" value="NZ_CP053098.1"/>
</dbReference>
<dbReference type="SMR" id="A3MA25"/>
<dbReference type="GeneID" id="92895622"/>
<dbReference type="KEGG" id="acb:A1S_3380"/>
<dbReference type="HOGENOM" id="CLU_030991_1_0_6"/>
<dbReference type="UniPathway" id="UPA00253">
    <property type="reaction ID" value="UER00457"/>
</dbReference>
<dbReference type="GO" id="GO:0005829">
    <property type="term" value="C:cytosol"/>
    <property type="evidence" value="ECO:0007669"/>
    <property type="project" value="TreeGrafter"/>
</dbReference>
<dbReference type="GO" id="GO:0004516">
    <property type="term" value="F:nicotinate phosphoribosyltransferase activity"/>
    <property type="evidence" value="ECO:0007669"/>
    <property type="project" value="UniProtKB-UniRule"/>
</dbReference>
<dbReference type="GO" id="GO:0034355">
    <property type="term" value="P:NAD biosynthetic process via the salvage pathway"/>
    <property type="evidence" value="ECO:0007669"/>
    <property type="project" value="TreeGrafter"/>
</dbReference>
<dbReference type="CDD" id="cd01401">
    <property type="entry name" value="PncB_like"/>
    <property type="match status" value="1"/>
</dbReference>
<dbReference type="Gene3D" id="3.20.140.10">
    <property type="entry name" value="nicotinate phosphoribosyltransferase"/>
    <property type="match status" value="1"/>
</dbReference>
<dbReference type="HAMAP" id="MF_00570">
    <property type="entry name" value="NAPRTase"/>
    <property type="match status" value="1"/>
</dbReference>
<dbReference type="InterPro" id="IPR041525">
    <property type="entry name" value="N/Namide_PRibTrfase"/>
</dbReference>
<dbReference type="InterPro" id="IPR040727">
    <property type="entry name" value="NAPRTase_N"/>
</dbReference>
<dbReference type="InterPro" id="IPR006406">
    <property type="entry name" value="Nic_PRibTrfase"/>
</dbReference>
<dbReference type="InterPro" id="IPR007229">
    <property type="entry name" value="Nic_PRibTrfase-Fam"/>
</dbReference>
<dbReference type="InterPro" id="IPR036068">
    <property type="entry name" value="Nicotinate_pribotase-like_C"/>
</dbReference>
<dbReference type="NCBIfam" id="TIGR01514">
    <property type="entry name" value="NAPRTase"/>
    <property type="match status" value="1"/>
</dbReference>
<dbReference type="NCBIfam" id="NF003704">
    <property type="entry name" value="PRK05321.1"/>
    <property type="match status" value="1"/>
</dbReference>
<dbReference type="PANTHER" id="PTHR11098">
    <property type="entry name" value="NICOTINATE PHOSPHORIBOSYLTRANSFERASE"/>
    <property type="match status" value="1"/>
</dbReference>
<dbReference type="PANTHER" id="PTHR11098:SF1">
    <property type="entry name" value="NICOTINATE PHOSPHORIBOSYLTRANSFERASE"/>
    <property type="match status" value="1"/>
</dbReference>
<dbReference type="Pfam" id="PF04095">
    <property type="entry name" value="NAPRTase"/>
    <property type="match status" value="1"/>
</dbReference>
<dbReference type="Pfam" id="PF17767">
    <property type="entry name" value="NAPRTase_N"/>
    <property type="match status" value="1"/>
</dbReference>
<dbReference type="PIRSF" id="PIRSF000484">
    <property type="entry name" value="NAPRT"/>
    <property type="match status" value="1"/>
</dbReference>
<dbReference type="SUPFAM" id="SSF51690">
    <property type="entry name" value="Nicotinate/Quinolinate PRTase C-terminal domain-like"/>
    <property type="match status" value="1"/>
</dbReference>
<dbReference type="SUPFAM" id="SSF54675">
    <property type="entry name" value="Nicotinate/Quinolinate PRTase N-terminal domain-like"/>
    <property type="match status" value="1"/>
</dbReference>
<sequence length="404" mass="47283">MSPIIHSLLDTDLYKFTMLQVVLHKFPQTHSVYHFRCRNLEDTVYPLVDILDDLNEQLDHLCNLKYKEDELQYLRKLRFIKSDFVDYLELFQLKRRFIHASIDEEGRLDIRIEGPMVQAMMFEIFVLAIVNELYFSRIKTDEVWAEGERRLQAKLELIQQYEKAQQPNDPPFLVSDFGTRRRYSFEWQKHVVAAFHNTVPNVFRGTSNVLLAKELNITPIGTMAHEFLQAFQALDVRLRDFQKAALETWVQEYRGDLGIALTDVVGMDAFLRDFDLYFAKLFDGLRHDSGDPYEWGDKAYAHYRKLKIDTKTKMLTFSDGLNLPKAWELHQYFKDRFQVSFGIGTNLTNDMGQTPLNIVLKLVECNGQSVAKISDSPGKTMTDNDTFLAYLRQVFQIEELDEAI</sequence>
<keyword id="KW-0436">Ligase</keyword>
<keyword id="KW-0597">Phosphoprotein</keyword>
<keyword id="KW-0662">Pyridine nucleotide biosynthesis</keyword>
<protein>
    <recommendedName>
        <fullName evidence="1">Nicotinate phosphoribosyltransferase</fullName>
        <shortName evidence="1">NAPRTase</shortName>
        <ecNumber evidence="1">6.3.4.21</ecNumber>
    </recommendedName>
</protein>
<comment type="function">
    <text evidence="1">Catalyzes the synthesis of beta-nicotinate D-ribonucleotide from nicotinate and 5-phospho-D-ribose 1-phosphate at the expense of ATP.</text>
</comment>
<comment type="catalytic activity">
    <reaction evidence="1">
        <text>nicotinate + 5-phospho-alpha-D-ribose 1-diphosphate + ATP + H2O = nicotinate beta-D-ribonucleotide + ADP + phosphate + diphosphate</text>
        <dbReference type="Rhea" id="RHEA:36163"/>
        <dbReference type="ChEBI" id="CHEBI:15377"/>
        <dbReference type="ChEBI" id="CHEBI:30616"/>
        <dbReference type="ChEBI" id="CHEBI:32544"/>
        <dbReference type="ChEBI" id="CHEBI:33019"/>
        <dbReference type="ChEBI" id="CHEBI:43474"/>
        <dbReference type="ChEBI" id="CHEBI:57502"/>
        <dbReference type="ChEBI" id="CHEBI:58017"/>
        <dbReference type="ChEBI" id="CHEBI:456216"/>
        <dbReference type="EC" id="6.3.4.21"/>
    </reaction>
</comment>
<comment type="pathway">
    <text evidence="1">Cofactor biosynthesis; NAD(+) biosynthesis; nicotinate D-ribonucleotide from nicotinate: step 1/1.</text>
</comment>
<comment type="PTM">
    <text evidence="1">Transiently phosphorylated on a His residue during the reaction cycle. Phosphorylation strongly increases the affinity for substrates and increases the rate of nicotinate D-ribonucleotide production. Dephosphorylation regenerates the low-affinity form of the enzyme, leading to product release.</text>
</comment>
<comment type="similarity">
    <text evidence="1">Belongs to the NAPRTase family.</text>
</comment>
<accession>A3MA25</accession>
<reference key="1">
    <citation type="journal article" date="2007" name="Genes Dev.">
        <title>New insights into Acinetobacter baumannii pathogenesis revealed by high-density pyrosequencing and transposon mutagenesis.</title>
        <authorList>
            <person name="Smith M.G."/>
            <person name="Gianoulis T.A."/>
            <person name="Pukatzki S."/>
            <person name="Mekalanos J.J."/>
            <person name="Ornston L.N."/>
            <person name="Gerstein M."/>
            <person name="Snyder M."/>
        </authorList>
    </citation>
    <scope>NUCLEOTIDE SEQUENCE [LARGE SCALE GENOMIC DNA]</scope>
    <source>
        <strain>ATCC 17978 / DSM 105126 / CIP 53.77 / LMG 1025 / NCDC KC755 / 5377</strain>
    </source>
</reference>
<gene>
    <name evidence="1" type="primary">pncB</name>
    <name type="ordered locus">A1S_3380</name>
</gene>
<evidence type="ECO:0000255" key="1">
    <source>
        <dbReference type="HAMAP-Rule" id="MF_00570"/>
    </source>
</evidence>
<feature type="chain" id="PRO_1000129459" description="Nicotinate phosphoribosyltransferase">
    <location>
        <begin position="1"/>
        <end position="404"/>
    </location>
</feature>
<feature type="modified residue" description="Phosphohistidine; by autocatalysis" evidence="1">
    <location>
        <position position="225"/>
    </location>
</feature>
<name>PNCB_ACIBT</name>
<proteinExistence type="inferred from homology"/>